<gene>
    <name evidence="1" type="primary">rpsC</name>
    <name type="ordered locus">EcHS_A3508</name>
</gene>
<comment type="function">
    <text evidence="1">Binds the lower part of the 30S subunit head. Binds mRNA in the 70S ribosome, positioning it for translation.</text>
</comment>
<comment type="subunit">
    <text evidence="1">Part of the 30S ribosomal subunit. Forms a tight complex with proteins S10 and S14.</text>
</comment>
<comment type="similarity">
    <text evidence="1">Belongs to the universal ribosomal protein uS3 family.</text>
</comment>
<protein>
    <recommendedName>
        <fullName evidence="1">Small ribosomal subunit protein uS3</fullName>
    </recommendedName>
    <alternativeName>
        <fullName evidence="2">30S ribosomal protein S3</fullName>
    </alternativeName>
</protein>
<dbReference type="EMBL" id="CP000802">
    <property type="protein sequence ID" value="ABV07723.1"/>
    <property type="molecule type" value="Genomic_DNA"/>
</dbReference>
<dbReference type="RefSeq" id="WP_000529945.1">
    <property type="nucleotide sequence ID" value="NC_009800.1"/>
</dbReference>
<dbReference type="SMR" id="A8A5B9"/>
<dbReference type="GeneID" id="97603663"/>
<dbReference type="KEGG" id="ecx:EcHS_A3508"/>
<dbReference type="HOGENOM" id="CLU_058591_0_2_6"/>
<dbReference type="GO" id="GO:0022627">
    <property type="term" value="C:cytosolic small ribosomal subunit"/>
    <property type="evidence" value="ECO:0007669"/>
    <property type="project" value="TreeGrafter"/>
</dbReference>
<dbReference type="GO" id="GO:0003729">
    <property type="term" value="F:mRNA binding"/>
    <property type="evidence" value="ECO:0007669"/>
    <property type="project" value="UniProtKB-UniRule"/>
</dbReference>
<dbReference type="GO" id="GO:0019843">
    <property type="term" value="F:rRNA binding"/>
    <property type="evidence" value="ECO:0007669"/>
    <property type="project" value="UniProtKB-UniRule"/>
</dbReference>
<dbReference type="GO" id="GO:0003735">
    <property type="term" value="F:structural constituent of ribosome"/>
    <property type="evidence" value="ECO:0007669"/>
    <property type="project" value="InterPro"/>
</dbReference>
<dbReference type="GO" id="GO:0006412">
    <property type="term" value="P:translation"/>
    <property type="evidence" value="ECO:0007669"/>
    <property type="project" value="UniProtKB-UniRule"/>
</dbReference>
<dbReference type="CDD" id="cd02412">
    <property type="entry name" value="KH-II_30S_S3"/>
    <property type="match status" value="1"/>
</dbReference>
<dbReference type="FunFam" id="3.30.1140.32:FF:000001">
    <property type="entry name" value="30S ribosomal protein S3"/>
    <property type="match status" value="1"/>
</dbReference>
<dbReference type="FunFam" id="3.30.300.20:FF:000001">
    <property type="entry name" value="30S ribosomal protein S3"/>
    <property type="match status" value="1"/>
</dbReference>
<dbReference type="Gene3D" id="3.30.300.20">
    <property type="match status" value="1"/>
</dbReference>
<dbReference type="Gene3D" id="3.30.1140.32">
    <property type="entry name" value="Ribosomal protein S3, C-terminal domain"/>
    <property type="match status" value="1"/>
</dbReference>
<dbReference type="HAMAP" id="MF_01309_B">
    <property type="entry name" value="Ribosomal_uS3_B"/>
    <property type="match status" value="1"/>
</dbReference>
<dbReference type="InterPro" id="IPR004087">
    <property type="entry name" value="KH_dom"/>
</dbReference>
<dbReference type="InterPro" id="IPR015946">
    <property type="entry name" value="KH_dom-like_a/b"/>
</dbReference>
<dbReference type="InterPro" id="IPR004044">
    <property type="entry name" value="KH_dom_type_2"/>
</dbReference>
<dbReference type="InterPro" id="IPR009019">
    <property type="entry name" value="KH_sf_prok-type"/>
</dbReference>
<dbReference type="InterPro" id="IPR036419">
    <property type="entry name" value="Ribosomal_S3_C_sf"/>
</dbReference>
<dbReference type="InterPro" id="IPR005704">
    <property type="entry name" value="Ribosomal_uS3_bac-typ"/>
</dbReference>
<dbReference type="InterPro" id="IPR001351">
    <property type="entry name" value="Ribosomal_uS3_C"/>
</dbReference>
<dbReference type="InterPro" id="IPR018280">
    <property type="entry name" value="Ribosomal_uS3_CS"/>
</dbReference>
<dbReference type="NCBIfam" id="TIGR01009">
    <property type="entry name" value="rpsC_bact"/>
    <property type="match status" value="1"/>
</dbReference>
<dbReference type="PANTHER" id="PTHR11760">
    <property type="entry name" value="30S/40S RIBOSOMAL PROTEIN S3"/>
    <property type="match status" value="1"/>
</dbReference>
<dbReference type="PANTHER" id="PTHR11760:SF19">
    <property type="entry name" value="SMALL RIBOSOMAL SUBUNIT PROTEIN US3C"/>
    <property type="match status" value="1"/>
</dbReference>
<dbReference type="Pfam" id="PF07650">
    <property type="entry name" value="KH_2"/>
    <property type="match status" value="1"/>
</dbReference>
<dbReference type="Pfam" id="PF00189">
    <property type="entry name" value="Ribosomal_S3_C"/>
    <property type="match status" value="1"/>
</dbReference>
<dbReference type="SMART" id="SM00322">
    <property type="entry name" value="KH"/>
    <property type="match status" value="1"/>
</dbReference>
<dbReference type="SUPFAM" id="SSF54814">
    <property type="entry name" value="Prokaryotic type KH domain (KH-domain type II)"/>
    <property type="match status" value="1"/>
</dbReference>
<dbReference type="SUPFAM" id="SSF54821">
    <property type="entry name" value="Ribosomal protein S3 C-terminal domain"/>
    <property type="match status" value="1"/>
</dbReference>
<dbReference type="PROSITE" id="PS50823">
    <property type="entry name" value="KH_TYPE_2"/>
    <property type="match status" value="1"/>
</dbReference>
<dbReference type="PROSITE" id="PS00548">
    <property type="entry name" value="RIBOSOMAL_S3"/>
    <property type="match status" value="1"/>
</dbReference>
<name>RS3_ECOHS</name>
<sequence>MGQKVHPNGIRLGIVKPWNSTWFANTKEFADNLDSDFKVRQYLTKELAKASVSRIVIERPAKSIRVTIHTARPGIVIGKKGEDVEKLRKVVADIAGVPAQINIAEVRKPELDAKLVADSITSQLERRVMFRRAMKRAVQNAMRLGAKGIKVEVSGRLGGAEIARTEWYREGRVPLHTLRADIDYNTSEAHTTYGVIGVKVWIFKGEILGGMAAVEQPEKPAAQPKKQQRKGRK</sequence>
<feature type="chain" id="PRO_1000086117" description="Small ribosomal subunit protein uS3">
    <location>
        <begin position="1"/>
        <end position="233"/>
    </location>
</feature>
<feature type="domain" description="KH type-2" evidence="1">
    <location>
        <begin position="39"/>
        <end position="107"/>
    </location>
</feature>
<accession>A8A5B9</accession>
<organism>
    <name type="scientific">Escherichia coli O9:H4 (strain HS)</name>
    <dbReference type="NCBI Taxonomy" id="331112"/>
    <lineage>
        <taxon>Bacteria</taxon>
        <taxon>Pseudomonadati</taxon>
        <taxon>Pseudomonadota</taxon>
        <taxon>Gammaproteobacteria</taxon>
        <taxon>Enterobacterales</taxon>
        <taxon>Enterobacteriaceae</taxon>
        <taxon>Escherichia</taxon>
    </lineage>
</organism>
<evidence type="ECO:0000255" key="1">
    <source>
        <dbReference type="HAMAP-Rule" id="MF_01309"/>
    </source>
</evidence>
<evidence type="ECO:0000305" key="2"/>
<keyword id="KW-0687">Ribonucleoprotein</keyword>
<keyword id="KW-0689">Ribosomal protein</keyword>
<keyword id="KW-0694">RNA-binding</keyword>
<keyword id="KW-0699">rRNA-binding</keyword>
<reference key="1">
    <citation type="journal article" date="2008" name="J. Bacteriol.">
        <title>The pangenome structure of Escherichia coli: comparative genomic analysis of E. coli commensal and pathogenic isolates.</title>
        <authorList>
            <person name="Rasko D.A."/>
            <person name="Rosovitz M.J."/>
            <person name="Myers G.S.A."/>
            <person name="Mongodin E.F."/>
            <person name="Fricke W.F."/>
            <person name="Gajer P."/>
            <person name="Crabtree J."/>
            <person name="Sebaihia M."/>
            <person name="Thomson N.R."/>
            <person name="Chaudhuri R."/>
            <person name="Henderson I.R."/>
            <person name="Sperandio V."/>
            <person name="Ravel J."/>
        </authorList>
    </citation>
    <scope>NUCLEOTIDE SEQUENCE [LARGE SCALE GENOMIC DNA]</scope>
    <source>
        <strain>HS</strain>
    </source>
</reference>
<proteinExistence type="inferred from homology"/>